<protein>
    <recommendedName>
        <fullName>Protein UL91</fullName>
    </recommendedName>
</protein>
<sequence length="111" mass="12114">MNSLLAELNRLGVAHATTEDVFIFVDRLFQHFSFLFQAEESGPRRLELVASVFEHLTVECVNDILDACSHPDVNVVETSNTCRPCPSPVPSAPKTVSDAQTSCATPRAPVT</sequence>
<accession>F5HFJ8</accession>
<dbReference type="EMBL" id="AY446894">
    <property type="protein sequence ID" value="AAR31642.1"/>
    <property type="molecule type" value="Genomic_DNA"/>
</dbReference>
<dbReference type="RefSeq" id="YP_081538.1">
    <property type="nucleotide sequence ID" value="NC_006273.2"/>
</dbReference>
<dbReference type="DNASU" id="3077494"/>
<dbReference type="GeneID" id="3077494"/>
<dbReference type="KEGG" id="vg:3077494"/>
<dbReference type="Reactome" id="R-HSA-9610379">
    <property type="pathway name" value="HCMV Late Events"/>
</dbReference>
<dbReference type="Proteomes" id="UP000000938">
    <property type="component" value="Segment"/>
</dbReference>
<dbReference type="InterPro" id="IPR035385">
    <property type="entry name" value="U62/UL91"/>
</dbReference>
<dbReference type="Pfam" id="PF17442">
    <property type="entry name" value="U62_UL91"/>
    <property type="match status" value="1"/>
</dbReference>
<organism>
    <name type="scientific">Human cytomegalovirus (strain Merlin)</name>
    <name type="common">HHV-5</name>
    <name type="synonym">Human herpesvirus 5</name>
    <dbReference type="NCBI Taxonomy" id="295027"/>
    <lineage>
        <taxon>Viruses</taxon>
        <taxon>Duplodnaviria</taxon>
        <taxon>Heunggongvirae</taxon>
        <taxon>Peploviricota</taxon>
        <taxon>Herviviricetes</taxon>
        <taxon>Herpesvirales</taxon>
        <taxon>Orthoherpesviridae</taxon>
        <taxon>Betaherpesvirinae</taxon>
        <taxon>Cytomegalovirus</taxon>
        <taxon>Cytomegalovirus humanbeta5</taxon>
        <taxon>Human cytomegalovirus</taxon>
    </lineage>
</organism>
<proteinExistence type="inferred from homology"/>
<evidence type="ECO:0000256" key="1">
    <source>
        <dbReference type="SAM" id="MobiDB-lite"/>
    </source>
</evidence>
<evidence type="ECO:0000305" key="2"/>
<keyword id="KW-1185">Reference proteome</keyword>
<feature type="chain" id="PRO_0000418250" description="Protein UL91">
    <location>
        <begin position="1"/>
        <end position="111"/>
    </location>
</feature>
<feature type="region of interest" description="Disordered" evidence="1">
    <location>
        <begin position="84"/>
        <end position="111"/>
    </location>
</feature>
<comment type="similarity">
    <text evidence="2">Belongs to the herpesviridae UL91 family.</text>
</comment>
<reference key="1">
    <citation type="journal article" date="2004" name="J. Gen. Virol.">
        <title>Genetic content of wild-type human cytomegalovirus.</title>
        <authorList>
            <person name="Dolan A."/>
            <person name="Cunningham C."/>
            <person name="Hector R.D."/>
            <person name="Hassan-Walker A.F."/>
            <person name="Lee L."/>
            <person name="Addison C."/>
            <person name="Dargan D.J."/>
            <person name="McGeoch D.J."/>
            <person name="Gatherer D."/>
            <person name="Emery V.C."/>
            <person name="Griffiths P.D."/>
            <person name="Sinzger C."/>
            <person name="McSharry B.P."/>
            <person name="Wilkinson G.W.G."/>
            <person name="Davison A.J."/>
        </authorList>
    </citation>
    <scope>NUCLEOTIDE SEQUENCE [LARGE SCALE GENOMIC DNA]</scope>
</reference>
<organismHost>
    <name type="scientific">Homo sapiens</name>
    <name type="common">Human</name>
    <dbReference type="NCBI Taxonomy" id="9606"/>
</organismHost>
<name>UL91_HCMVM</name>
<gene>
    <name type="primary">UL91</name>
</gene>